<gene>
    <name type="primary">Eif6</name>
    <name type="synonym">Itgb4bp</name>
</gene>
<comment type="function">
    <text evidence="2 4 6 7 8">Binds to the 60S ribosomal subunit and prevents its association with the 40S ribosomal subunit to form the 80S initiation complex in the cytoplasm. Behaves as a stimulatory translation initiation factor downstream insulin/growth factors. Is also involved in ribosome biogenesis. Associates with pre-60S subunits in the nucleus and is involved in its nuclear export. Cytoplasmic release of TIF6 from 60S subunits and nuclear relocalization is promoted by a RACK1 (RACK1)-dependent protein kinase C activity. In tissues responsive to insulin, controls fatty acid synthesis and glycolysis by exerting translational control of adipogenic transcription factors such as CEBPB, CEBPD and ATF4 that have G/C rich or uORF in their 5'UTR (PubMed:26383020). Required for ROS-dependent megakaryocyte maturation and platelets formation, controls the expression of mitochondrial respiratory chain genes involved in reactive oxygen species (ROS) synthesis (PubMed:26391622). Involved in miRNA-mediated gene silencing by the RNA-induced silencing complex (RISC). Required for both miRNA-mediated translational repression and miRNA-mediated cleavage of complementary mRNAs by RISC (By similarity). Modulates cell cycle progression and global translation of pre-B cells, its activation seems to be rate-limiting in tumorigenesis and tumor growth (PubMed:21665150).</text>
</comment>
<comment type="subunit">
    <text evidence="2">Monomer. Associates with the 60S ribosomal subunit. Interacts with RACK1. Interacts with DICER1, AGO2, TARBP2, MOV10 and RPL7A; they form a large RNA-induced silencing complex (RISC).</text>
</comment>
<comment type="subcellular location">
    <subcellularLocation>
        <location>Cytoplasm</location>
    </subcellularLocation>
    <subcellularLocation>
        <location>Nucleus</location>
        <location>Nucleolus</location>
    </subcellularLocation>
    <text>Shuttles between cytoplasm and nucleus/nucleolus.</text>
</comment>
<comment type="tissue specificity">
    <text evidence="3 7 8">Detected in bladder, duodenum, liver, esophagus, pancreas, adipose tissue, megakaryocytes and testis with lower levels in muscle (at protein level).</text>
</comment>
<comment type="PTM">
    <text evidence="1">Phosphorylation at Ser-174 and Ser-175 by CSNK1D/CK1 promotes nuclear export.</text>
</comment>
<comment type="PTM">
    <text evidence="9">Ufmylated by UFL1.</text>
</comment>
<comment type="disruption phenotype">
    <text evidence="4">Embryonic lethality. Embryos die at preimplantation stage.</text>
</comment>
<comment type="similarity">
    <text evidence="2">Belongs to the eIF-6 family.</text>
</comment>
<proteinExistence type="evidence at protein level"/>
<organism>
    <name type="scientific">Mus musculus</name>
    <name type="common">Mouse</name>
    <dbReference type="NCBI Taxonomy" id="10090"/>
    <lineage>
        <taxon>Eukaryota</taxon>
        <taxon>Metazoa</taxon>
        <taxon>Chordata</taxon>
        <taxon>Craniata</taxon>
        <taxon>Vertebrata</taxon>
        <taxon>Euteleostomi</taxon>
        <taxon>Mammalia</taxon>
        <taxon>Eutheria</taxon>
        <taxon>Euarchontoglires</taxon>
        <taxon>Glires</taxon>
        <taxon>Rodentia</taxon>
        <taxon>Myomorpha</taxon>
        <taxon>Muroidea</taxon>
        <taxon>Muridae</taxon>
        <taxon>Murinae</taxon>
        <taxon>Mus</taxon>
        <taxon>Mus</taxon>
    </lineage>
</organism>
<name>IF6_MOUSE</name>
<dbReference type="EMBL" id="AF047046">
    <property type="protein sequence ID" value="AAD28078.1"/>
    <property type="molecule type" value="mRNA"/>
</dbReference>
<dbReference type="EMBL" id="BC015274">
    <property type="protein sequence ID" value="AAH15274.1"/>
    <property type="molecule type" value="mRNA"/>
</dbReference>
<dbReference type="EMBL" id="BC024442">
    <property type="protein sequence ID" value="AAH24442.1"/>
    <property type="molecule type" value="mRNA"/>
</dbReference>
<dbReference type="EMBL" id="Y11460">
    <property type="protein sequence ID" value="CAA72246.1"/>
    <property type="molecule type" value="mRNA"/>
</dbReference>
<dbReference type="CCDS" id="CCDS16956.1"/>
<dbReference type="RefSeq" id="NP_034709.1">
    <property type="nucleotide sequence ID" value="NM_010579.2"/>
</dbReference>
<dbReference type="SMR" id="O55135"/>
<dbReference type="BioGRID" id="200831">
    <property type="interactions" value="33"/>
</dbReference>
<dbReference type="FunCoup" id="O55135">
    <property type="interactions" value="2599"/>
</dbReference>
<dbReference type="IntAct" id="O55135">
    <property type="interactions" value="4"/>
</dbReference>
<dbReference type="STRING" id="10090.ENSMUSP00000029142"/>
<dbReference type="GlyGen" id="O55135">
    <property type="glycosylation" value="3 sites, 1 N-linked glycan (1 site), 1 O-linked glycan (2 sites)"/>
</dbReference>
<dbReference type="iPTMnet" id="O55135"/>
<dbReference type="PhosphoSitePlus" id="O55135"/>
<dbReference type="SwissPalm" id="O55135"/>
<dbReference type="jPOST" id="O55135"/>
<dbReference type="PaxDb" id="10090-ENSMUSP00000029142"/>
<dbReference type="PeptideAtlas" id="O55135"/>
<dbReference type="ProteomicsDB" id="273095"/>
<dbReference type="Pumba" id="O55135"/>
<dbReference type="Antibodypedia" id="35156">
    <property type="antibodies" value="263 antibodies from 35 providers"/>
</dbReference>
<dbReference type="DNASU" id="16418"/>
<dbReference type="Ensembl" id="ENSMUST00000029142.15">
    <property type="protein sequence ID" value="ENSMUSP00000029142.9"/>
    <property type="gene ID" value="ENSMUSG00000027613.16"/>
</dbReference>
<dbReference type="GeneID" id="16418"/>
<dbReference type="KEGG" id="mmu:16418"/>
<dbReference type="UCSC" id="uc008nll.1">
    <property type="organism name" value="mouse"/>
</dbReference>
<dbReference type="AGR" id="MGI:1196288"/>
<dbReference type="CTD" id="3692"/>
<dbReference type="MGI" id="MGI:1196288">
    <property type="gene designation" value="Eif6"/>
</dbReference>
<dbReference type="VEuPathDB" id="HostDB:ENSMUSG00000027613"/>
<dbReference type="eggNOG" id="KOG3185">
    <property type="taxonomic scope" value="Eukaryota"/>
</dbReference>
<dbReference type="GeneTree" id="ENSGT00390000015972"/>
<dbReference type="HOGENOM" id="CLU_071894_0_0_1"/>
<dbReference type="InParanoid" id="O55135"/>
<dbReference type="OMA" id="WCAFCGM"/>
<dbReference type="OrthoDB" id="4155914at2759"/>
<dbReference type="PhylomeDB" id="O55135"/>
<dbReference type="TreeFam" id="TF105396"/>
<dbReference type="BioGRID-ORCS" id="16418">
    <property type="hits" value="34 hits in 82 CRISPR screens"/>
</dbReference>
<dbReference type="PRO" id="PR:O55135"/>
<dbReference type="Proteomes" id="UP000000589">
    <property type="component" value="Chromosome 2"/>
</dbReference>
<dbReference type="RNAct" id="O55135">
    <property type="molecule type" value="protein"/>
</dbReference>
<dbReference type="Bgee" id="ENSMUSG00000027613">
    <property type="expression patterns" value="Expressed in small intestine Peyer's patch and 263 other cell types or tissues"/>
</dbReference>
<dbReference type="ExpressionAtlas" id="O55135">
    <property type="expression patterns" value="baseline and differential"/>
</dbReference>
<dbReference type="GO" id="GO:0005737">
    <property type="term" value="C:cytoplasm"/>
    <property type="evidence" value="ECO:0007669"/>
    <property type="project" value="UniProtKB-SubCell"/>
</dbReference>
<dbReference type="GO" id="GO:0005882">
    <property type="term" value="C:intermediate filament"/>
    <property type="evidence" value="ECO:0000314"/>
    <property type="project" value="MGI"/>
</dbReference>
<dbReference type="GO" id="GO:0005638">
    <property type="term" value="C:lamin filament"/>
    <property type="evidence" value="ECO:0000314"/>
    <property type="project" value="MGI"/>
</dbReference>
<dbReference type="GO" id="GO:0005730">
    <property type="term" value="C:nucleolus"/>
    <property type="evidence" value="ECO:0007669"/>
    <property type="project" value="UniProtKB-SubCell"/>
</dbReference>
<dbReference type="GO" id="GO:0005654">
    <property type="term" value="C:nucleoplasm"/>
    <property type="evidence" value="ECO:0007669"/>
    <property type="project" value="Ensembl"/>
</dbReference>
<dbReference type="GO" id="GO:0045202">
    <property type="term" value="C:synapse"/>
    <property type="evidence" value="ECO:0000314"/>
    <property type="project" value="SynGO"/>
</dbReference>
<dbReference type="GO" id="GO:0043023">
    <property type="term" value="F:ribosomal large subunit binding"/>
    <property type="evidence" value="ECO:0007669"/>
    <property type="project" value="UniProtKB-UniRule"/>
</dbReference>
<dbReference type="GO" id="GO:0043022">
    <property type="term" value="F:ribosome binding"/>
    <property type="evidence" value="ECO:0000250"/>
    <property type="project" value="UniProtKB"/>
</dbReference>
<dbReference type="GO" id="GO:0003743">
    <property type="term" value="F:translation initiation factor activity"/>
    <property type="evidence" value="ECO:0007669"/>
    <property type="project" value="UniProtKB-UniRule"/>
</dbReference>
<dbReference type="GO" id="GO:0042256">
    <property type="term" value="P:cytosolic ribosome assembly"/>
    <property type="evidence" value="ECO:0000250"/>
    <property type="project" value="UniProtKB"/>
</dbReference>
<dbReference type="GO" id="GO:0035278">
    <property type="term" value="P:miRNA-mediated gene silencing by inhibition of translation"/>
    <property type="evidence" value="ECO:0000250"/>
    <property type="project" value="UniProtKB"/>
</dbReference>
<dbReference type="GO" id="GO:0035195">
    <property type="term" value="P:miRNA-mediated post-transcriptional gene silencing"/>
    <property type="evidence" value="ECO:0000250"/>
    <property type="project" value="UniProtKB"/>
</dbReference>
<dbReference type="GO" id="GO:0045727">
    <property type="term" value="P:positive regulation of translation"/>
    <property type="evidence" value="ECO:0000315"/>
    <property type="project" value="UniProtKB"/>
</dbReference>
<dbReference type="GO" id="GO:0042304">
    <property type="term" value="P:regulation of fatty acid biosynthetic process"/>
    <property type="evidence" value="ECO:0000315"/>
    <property type="project" value="UniProtKB"/>
</dbReference>
<dbReference type="GO" id="GO:0006110">
    <property type="term" value="P:regulation of glycolytic process"/>
    <property type="evidence" value="ECO:0000315"/>
    <property type="project" value="UniProtKB"/>
</dbReference>
<dbReference type="GO" id="GO:0045652">
    <property type="term" value="P:regulation of megakaryocyte differentiation"/>
    <property type="evidence" value="ECO:0000315"/>
    <property type="project" value="UniProtKB"/>
</dbReference>
<dbReference type="GO" id="GO:2000377">
    <property type="term" value="P:regulation of reactive oxygen species metabolic process"/>
    <property type="evidence" value="ECO:0000315"/>
    <property type="project" value="UniProtKB"/>
</dbReference>
<dbReference type="GO" id="GO:0032868">
    <property type="term" value="P:response to insulin"/>
    <property type="evidence" value="ECO:0000315"/>
    <property type="project" value="UniProtKB"/>
</dbReference>
<dbReference type="GO" id="GO:0042273">
    <property type="term" value="P:ribosomal large subunit biogenesis"/>
    <property type="evidence" value="ECO:0007669"/>
    <property type="project" value="UniProtKB-UniRule"/>
</dbReference>
<dbReference type="GO" id="GO:0000054">
    <property type="term" value="P:ribosomal subunit export from nucleus"/>
    <property type="evidence" value="ECO:0007669"/>
    <property type="project" value="UniProtKB-UniRule"/>
</dbReference>
<dbReference type="CDD" id="cd00527">
    <property type="entry name" value="IF6"/>
    <property type="match status" value="1"/>
</dbReference>
<dbReference type="FunFam" id="3.75.10.10:FF:000001">
    <property type="entry name" value="Eukaryotic translation initiation factor 6"/>
    <property type="match status" value="1"/>
</dbReference>
<dbReference type="Gene3D" id="3.75.10.10">
    <property type="entry name" value="L-arginine/glycine Amidinotransferase, Chain A"/>
    <property type="match status" value="1"/>
</dbReference>
<dbReference type="HAMAP" id="MF_00032">
    <property type="entry name" value="eIF_6"/>
    <property type="match status" value="1"/>
</dbReference>
<dbReference type="InterPro" id="IPR002769">
    <property type="entry name" value="eIF6"/>
</dbReference>
<dbReference type="NCBIfam" id="TIGR00323">
    <property type="entry name" value="eIF-6"/>
    <property type="match status" value="1"/>
</dbReference>
<dbReference type="PANTHER" id="PTHR10784">
    <property type="entry name" value="TRANSLATION INITIATION FACTOR 6"/>
    <property type="match status" value="1"/>
</dbReference>
<dbReference type="Pfam" id="PF01912">
    <property type="entry name" value="eIF-6"/>
    <property type="match status" value="1"/>
</dbReference>
<dbReference type="PIRSF" id="PIRSF006413">
    <property type="entry name" value="IF-6"/>
    <property type="match status" value="1"/>
</dbReference>
<dbReference type="SMART" id="SM00654">
    <property type="entry name" value="eIF6"/>
    <property type="match status" value="1"/>
</dbReference>
<dbReference type="SUPFAM" id="SSF55909">
    <property type="entry name" value="Pentein"/>
    <property type="match status" value="1"/>
</dbReference>
<evidence type="ECO:0000250" key="1">
    <source>
        <dbReference type="UniProtKB" id="P56537"/>
    </source>
</evidence>
<evidence type="ECO:0000255" key="2">
    <source>
        <dbReference type="HAMAP-Rule" id="MF_03132"/>
    </source>
</evidence>
<evidence type="ECO:0000269" key="3">
    <source>
    </source>
</evidence>
<evidence type="ECO:0000269" key="4">
    <source>
    </source>
</evidence>
<evidence type="ECO:0000269" key="5">
    <source>
    </source>
</evidence>
<evidence type="ECO:0000269" key="6">
    <source>
    </source>
</evidence>
<evidence type="ECO:0000269" key="7">
    <source>
    </source>
</evidence>
<evidence type="ECO:0000269" key="8">
    <source>
    </source>
</evidence>
<evidence type="ECO:0000269" key="9">
    <source>
    </source>
</evidence>
<feature type="chain" id="PRO_0000153735" description="Eukaryotic translation initiation factor 6">
    <location>
        <begin position="1"/>
        <end position="245"/>
    </location>
</feature>
<feature type="modified residue" description="Phosphotyrosine" evidence="1">
    <location>
        <position position="113"/>
    </location>
</feature>
<feature type="modified residue" description="Phosphothreonine" evidence="2 5">
    <location>
        <position position="165"/>
    </location>
</feature>
<feature type="modified residue" description="Phosphoserine" evidence="2 5">
    <location>
        <position position="166"/>
    </location>
</feature>
<feature type="modified residue" description="Phosphoserine; by CK1" evidence="2 5">
    <location>
        <position position="174"/>
    </location>
</feature>
<feature type="modified residue" description="Phosphoserine; by CK1" evidence="2 5">
    <location>
        <position position="175"/>
    </location>
</feature>
<feature type="modified residue" description="Phosphoserine; by PKC" evidence="2 6">
    <location>
        <position position="235"/>
    </location>
</feature>
<feature type="modified residue" description="Phosphoserine" evidence="1 2">
    <location>
        <position position="239"/>
    </location>
</feature>
<feature type="modified residue" description="Phosphoserine" evidence="1 2">
    <location>
        <position position="243"/>
    </location>
</feature>
<feature type="mutagenesis site" description="Abolishes insulin-stimulated translation, abrogates tumorigenesis." evidence="4 6 7">
    <original>S</original>
    <variation>A</variation>
    <location>
        <position position="235"/>
    </location>
</feature>
<keyword id="KW-0963">Cytoplasm</keyword>
<keyword id="KW-0396">Initiation factor</keyword>
<keyword id="KW-0539">Nucleus</keyword>
<keyword id="KW-0597">Phosphoprotein</keyword>
<keyword id="KW-0648">Protein biosynthesis</keyword>
<keyword id="KW-1185">Reference proteome</keyword>
<keyword id="KW-0690">Ribosome biogenesis</keyword>
<keyword id="KW-0832">Ubl conjugation</keyword>
<accession>O55135</accession>
<sequence>MAVRASFENNCEVGCFAKLTNAYCLVAIGGSENFYSVFEGELSDAIPVVHASIAGCRIIGRMCVGNRHGLLVPNNTTDQELQHIRNSLPDSVQIRRVEERLSALGNVTTCNDYVALVHPDLDRETEEILADVLKVEVFRQTVADQVLVGSYCVFSNQGGLVHPKTSIEDQDELSSLLQVPLVAGTVNRGSEVIAAGMVVNDWCAFCGLDTTSTELSVVESVFKLNEAKPSTIATSMRDSLIDSLT</sequence>
<reference key="1">
    <citation type="journal article" date="1999" name="J. Biol. Chem.">
        <title>Cloning of murine translation initiation factor 6 and functional analysis of the homologous sequence YPR016c in Saccharomyces cerevisiae.</title>
        <authorList>
            <person name="Wood L.C."/>
            <person name="Ashby M.N."/>
            <person name="Grunfeld C."/>
            <person name="Feingold K.R."/>
        </authorList>
    </citation>
    <scope>NUCLEOTIDE SEQUENCE [MRNA]</scope>
    <source>
        <strain>BALB/cJ</strain>
        <tissue>Liver</tissue>
    </source>
</reference>
<reference key="2">
    <citation type="journal article" date="2004" name="Genome Res.">
        <title>The status, quality, and expansion of the NIH full-length cDNA project: the Mammalian Gene Collection (MGC).</title>
        <authorList>
            <consortium name="The MGC Project Team"/>
        </authorList>
    </citation>
    <scope>NUCLEOTIDE SEQUENCE [LARGE SCALE MRNA]</scope>
    <source>
        <strain>FVB/N</strain>
        <tissue>Colon</tissue>
        <tissue>Kidney</tissue>
    </source>
</reference>
<reference key="3">
    <citation type="journal article" date="1997" name="J. Biol. Chem.">
        <title>Isolation of a novel beta4 integrin-binding protein (p27(BBP)) highly expressed in epithelial cells.</title>
        <authorList>
            <person name="Biffo S."/>
            <person name="Sanvito F."/>
            <person name="Costa S."/>
            <person name="Preve L."/>
            <person name="Pignatelli R."/>
            <person name="Spinardi L."/>
            <person name="Marchisio P.C."/>
        </authorList>
    </citation>
    <scope>NUCLEOTIDE SEQUENCE [MRNA] OF 80-163</scope>
    <source>
        <strain>BALB/cJ</strain>
    </source>
</reference>
<reference key="4">
    <citation type="journal article" date="2001" name="Gene">
        <title>The human ITGB4BP gene is constitutively expressed in vitro, but highly modulated in vivo.</title>
        <authorList>
            <person name="Donadini A."/>
            <person name="Giodini A."/>
            <person name="Sanvito F."/>
            <person name="Marchisio P.C."/>
            <person name="Biffo S."/>
        </authorList>
    </citation>
    <scope>SUBCELLULAR LOCATION</scope>
    <scope>TISSUE SPECIFICITY</scope>
</reference>
<reference key="5">
    <citation type="journal article" date="2008" name="Nature">
        <title>Eukaryotic initiation factor 6 is rate-limiting in translation, growth and transformation.</title>
        <authorList>
            <person name="Gandin V."/>
            <person name="Miluzio A."/>
            <person name="Barbieri A.M."/>
            <person name="Beugnet A."/>
            <person name="Kiyokawa H."/>
            <person name="Marchisio P.C."/>
            <person name="Biffo S."/>
        </authorList>
    </citation>
    <scope>FUNCTION</scope>
    <scope>SUBCELLULAR LOCATION</scope>
    <scope>DISRUPTION PHENOTYPE</scope>
    <scope>MUTAGENESIS OF SER-235</scope>
</reference>
<reference key="6">
    <citation type="journal article" date="2010" name="Cell">
        <title>A tissue-specific atlas of mouse protein phosphorylation and expression.</title>
        <authorList>
            <person name="Huttlin E.L."/>
            <person name="Jedrychowski M.P."/>
            <person name="Elias J.E."/>
            <person name="Goswami T."/>
            <person name="Rad R."/>
            <person name="Beausoleil S.A."/>
            <person name="Villen J."/>
            <person name="Haas W."/>
            <person name="Sowa M.E."/>
            <person name="Gygi S.P."/>
        </authorList>
    </citation>
    <scope>IDENTIFICATION BY MASS SPECTROMETRY [LARGE SCALE ANALYSIS]</scope>
    <source>
        <tissue>Brain</tissue>
        <tissue>Brown adipose tissue</tissue>
        <tissue>Heart</tissue>
        <tissue>Kidney</tissue>
        <tissue>Liver</tissue>
        <tissue>Lung</tissue>
        <tissue>Pancreas</tissue>
        <tissue>Spleen</tissue>
        <tissue>Testis</tissue>
    </source>
</reference>
<reference key="7">
    <citation type="journal article" date="2011" name="Cancer Cell">
        <title>Impairment of cytoplasmic eIF6 activity restricts lymphomagenesis and tumor progression without affecting normal growth.</title>
        <authorList>
            <person name="Miluzio A."/>
            <person name="Beugnet A."/>
            <person name="Grosso S."/>
            <person name="Brina D."/>
            <person name="Mancino M."/>
            <person name="Campaner S."/>
            <person name="Amati B."/>
            <person name="de Marco A."/>
            <person name="Biffo S."/>
        </authorList>
    </citation>
    <scope>FUNCTION</scope>
    <scope>PHOSPHORYLATION AT SER-235</scope>
    <scope>MUTAGENESIS OF SER-235</scope>
</reference>
<reference key="8">
    <citation type="journal article" date="2011" name="Genes Dev.">
        <title>Uncoupling of GTP hydrolysis from eIF6 release on the ribosome causes Shwachman-Diamond syndrome.</title>
        <authorList>
            <person name="Finch A.J."/>
            <person name="Hilcenko C."/>
            <person name="Basse N."/>
            <person name="Drynan L.F."/>
            <person name="Goyenechea B."/>
            <person name="Menne T.F."/>
            <person name="Gonzalez Fernandez A."/>
            <person name="Simpson P."/>
            <person name="D'Santos C.S."/>
            <person name="Arends M.J."/>
            <person name="Donadieu J."/>
            <person name="Bellanne-Chantelot C."/>
            <person name="Costanzo M."/>
            <person name="Boone C."/>
            <person name="McKenzie A.N."/>
            <person name="Freund S.M."/>
            <person name="Warren A.J."/>
        </authorList>
    </citation>
    <scope>PHOSPHORYLATION AT THR-165; SER-166; SER-174 AND SER-175</scope>
    <scope>IDENTIFICATION AT THE 60S RIBOSOME SUBUNIT</scope>
    <scope>IDENTIFICATION BY MASS SPECTROMETRY</scope>
</reference>
<reference key="9">
    <citation type="journal article" date="2015" name="J. Thromb. Haemost.">
        <title>Eukaryotic translation initiation factor 6 is a novel regulator of reactive oxygen species-dependent megakaryocyte maturation.</title>
        <authorList>
            <person name="Ricciardi S."/>
            <person name="Miluzio A."/>
            <person name="Brina D."/>
            <person name="Clarke K."/>
            <person name="Bonomo M."/>
            <person name="Aiolfi R."/>
            <person name="Guidotti L.G."/>
            <person name="Falciani F."/>
            <person name="Biffo S."/>
        </authorList>
    </citation>
    <scope>FUNCTION</scope>
    <scope>TISSUE SPECIFICITY</scope>
</reference>
<reference key="10">
    <citation type="journal article" date="2015" name="Nat. Commun.">
        <title>eIF6 coordinates insulin sensitivity and lipid metabolism by coupling translation to transcription.</title>
        <authorList>
            <person name="Brina D."/>
            <person name="Miluzio A."/>
            <person name="Ricciardi S."/>
            <person name="Clarke K."/>
            <person name="Davidsen P.K."/>
            <person name="Viero G."/>
            <person name="Tebaldi T."/>
            <person name="Offenhaeuser N."/>
            <person name="Rozman J."/>
            <person name="Rathkolb B."/>
            <person name="Neschen S."/>
            <person name="Klingenspor M."/>
            <person name="Wolf E."/>
            <person name="Gailus-Durner V."/>
            <person name="Fuchs H."/>
            <person name="Hrabe de Angelis M."/>
            <person name="Quattrone A."/>
            <person name="Falciani F."/>
            <person name="Biffo S."/>
        </authorList>
    </citation>
    <scope>FUNCTION</scope>
    <scope>TISSUE SPECIFICITY</scope>
    <scope>MUTAGENESIS OF SER-235</scope>
</reference>
<reference key="11">
    <citation type="journal article" date="2017" name="Cell">
        <title>The mammalian ribo-interactome reveals ribosome functional diversity and heterogeneity.</title>
        <authorList>
            <person name="Simsek D."/>
            <person name="Tiu G.C."/>
            <person name="Flynn R.A."/>
            <person name="Byeon G.W."/>
            <person name="Leppek K."/>
            <person name="Xu A.F."/>
            <person name="Chang H.Y."/>
            <person name="Barna M."/>
        </authorList>
    </citation>
    <scope>UFMYLATION</scope>
</reference>
<protein>
    <recommendedName>
        <fullName evidence="2">Eukaryotic translation initiation factor 6</fullName>
        <shortName evidence="2">eIF-6</shortName>
    </recommendedName>
    <alternativeName>
        <fullName>B4 integrin interactor</fullName>
    </alternativeName>
    <alternativeName>
        <fullName>CAB</fullName>
    </alternativeName>
    <alternativeName>
        <fullName>p27(BBP)</fullName>
    </alternativeName>
</protein>